<protein>
    <recommendedName>
        <fullName>Cytochrome c oxidase assembly factor 5</fullName>
    </recommendedName>
</protein>
<evidence type="ECO:0000250" key="1"/>
<evidence type="ECO:0000250" key="2">
    <source>
        <dbReference type="UniProtKB" id="Q86WW8"/>
    </source>
</evidence>
<evidence type="ECO:0000255" key="3">
    <source>
        <dbReference type="PROSITE-ProRule" id="PRU01150"/>
    </source>
</evidence>
<evidence type="ECO:0000305" key="4"/>
<comment type="function">
    <text evidence="1">Involved in an early step of the mitochondrial complex IV assembly process.</text>
</comment>
<comment type="similarity">
    <text evidence="4">Belongs to the PET191 family.</text>
</comment>
<organism>
    <name type="scientific">Pongo abelii</name>
    <name type="common">Sumatran orangutan</name>
    <name type="synonym">Pongo pygmaeus abelii</name>
    <dbReference type="NCBI Taxonomy" id="9601"/>
    <lineage>
        <taxon>Eukaryota</taxon>
        <taxon>Metazoa</taxon>
        <taxon>Chordata</taxon>
        <taxon>Craniata</taxon>
        <taxon>Vertebrata</taxon>
        <taxon>Euteleostomi</taxon>
        <taxon>Mammalia</taxon>
        <taxon>Eutheria</taxon>
        <taxon>Euarchontoglires</taxon>
        <taxon>Primates</taxon>
        <taxon>Haplorrhini</taxon>
        <taxon>Catarrhini</taxon>
        <taxon>Hominidae</taxon>
        <taxon>Pongo</taxon>
    </lineage>
</organism>
<reference key="1">
    <citation type="submission" date="2004-11" db="EMBL/GenBank/DDBJ databases">
        <authorList>
            <consortium name="The German cDNA consortium"/>
        </authorList>
    </citation>
    <scope>NUCLEOTIDE SEQUENCE [LARGE SCALE MRNA]</scope>
    <source>
        <tissue>Kidney</tissue>
    </source>
</reference>
<gene>
    <name type="primary">Coa5</name>
</gene>
<feature type="chain" id="PRO_0000325878" description="Cytochrome c oxidase assembly factor 5">
    <location>
        <begin position="1"/>
        <end position="74"/>
    </location>
</feature>
<feature type="domain" description="CHCH" evidence="3">
    <location>
        <begin position="27"/>
        <end position="65"/>
    </location>
</feature>
<feature type="short sequence motif" description="Cx10C motif" evidence="3">
    <location>
        <begin position="30"/>
        <end position="41"/>
    </location>
</feature>
<feature type="short sequence motif" description="Cx9C motif" evidence="3">
    <location>
        <begin position="47"/>
        <end position="57"/>
    </location>
</feature>
<feature type="modified residue" description="Phosphoserine" evidence="2">
    <location>
        <position position="37"/>
    </location>
</feature>
<feature type="disulfide bond" evidence="3">
    <location>
        <begin position="30"/>
        <end position="57"/>
    </location>
</feature>
<feature type="disulfide bond" evidence="3">
    <location>
        <begin position="41"/>
        <end position="47"/>
    </location>
</feature>
<accession>Q5RFJ0</accession>
<proteinExistence type="inferred from homology"/>
<sequence length="74" mass="8363">MPKYYEDKPQGGACGGLKEDLGACLLESDCVVQEGKSPRQCLKEGYCNSLKYAFFECKRSVLDNRARFRGRKGY</sequence>
<keyword id="KW-1015">Disulfide bond</keyword>
<keyword id="KW-0597">Phosphoprotein</keyword>
<keyword id="KW-1185">Reference proteome</keyword>
<name>COA5_PONAB</name>
<dbReference type="EMBL" id="CR857166">
    <property type="protein sequence ID" value="CAH89467.1"/>
    <property type="molecule type" value="mRNA"/>
</dbReference>
<dbReference type="RefSeq" id="NP_001181968.1">
    <property type="nucleotide sequence ID" value="NM_001195039.2"/>
</dbReference>
<dbReference type="SMR" id="Q5RFJ0"/>
<dbReference type="FunCoup" id="Q5RFJ0">
    <property type="interactions" value="939"/>
</dbReference>
<dbReference type="STRING" id="9601.ENSPPYP00000013474"/>
<dbReference type="Ensembl" id="ENSPPYT00000014023.2">
    <property type="protein sequence ID" value="ENSPPYP00000013474.1"/>
    <property type="gene ID" value="ENSPPYG00000012085.2"/>
</dbReference>
<dbReference type="GeneID" id="100171469"/>
<dbReference type="KEGG" id="pon:100171469"/>
<dbReference type="CTD" id="493753"/>
<dbReference type="eggNOG" id="KOG4114">
    <property type="taxonomic scope" value="Eukaryota"/>
</dbReference>
<dbReference type="GeneTree" id="ENSGT00390000005548"/>
<dbReference type="HOGENOM" id="CLU_138069_2_2_1"/>
<dbReference type="InParanoid" id="Q5RFJ0"/>
<dbReference type="OMA" id="KKTPKEC"/>
<dbReference type="OrthoDB" id="282149at2759"/>
<dbReference type="TreeFam" id="TF313953"/>
<dbReference type="Proteomes" id="UP000001595">
    <property type="component" value="Chromosome 2A"/>
</dbReference>
<dbReference type="GO" id="GO:0005739">
    <property type="term" value="C:mitochondrion"/>
    <property type="evidence" value="ECO:0007669"/>
    <property type="project" value="TreeGrafter"/>
</dbReference>
<dbReference type="GO" id="GO:0002521">
    <property type="term" value="P:leukocyte differentiation"/>
    <property type="evidence" value="ECO:0007669"/>
    <property type="project" value="Ensembl"/>
</dbReference>
<dbReference type="GO" id="GO:0033617">
    <property type="term" value="P:mitochondrial cytochrome c oxidase assembly"/>
    <property type="evidence" value="ECO:0007669"/>
    <property type="project" value="TreeGrafter"/>
</dbReference>
<dbReference type="GO" id="GO:0035264">
    <property type="term" value="P:multicellular organism growth"/>
    <property type="evidence" value="ECO:0007669"/>
    <property type="project" value="Ensembl"/>
</dbReference>
<dbReference type="GO" id="GO:0048536">
    <property type="term" value="P:spleen development"/>
    <property type="evidence" value="ECO:0007669"/>
    <property type="project" value="Ensembl"/>
</dbReference>
<dbReference type="GO" id="GO:0048538">
    <property type="term" value="P:thymus development"/>
    <property type="evidence" value="ECO:0007669"/>
    <property type="project" value="Ensembl"/>
</dbReference>
<dbReference type="InterPro" id="IPR018793">
    <property type="entry name" value="Cyt_c_oxidase_assmbl_Pet191"/>
</dbReference>
<dbReference type="PANTHER" id="PTHR28627">
    <property type="entry name" value="CYTOCHROME C OXIDASE ASSEMBLY FACTOR 5"/>
    <property type="match status" value="1"/>
</dbReference>
<dbReference type="PANTHER" id="PTHR28627:SF1">
    <property type="entry name" value="CYTOCHROME C OXIDASE ASSEMBLY FACTOR 5"/>
    <property type="match status" value="1"/>
</dbReference>
<dbReference type="Pfam" id="PF10203">
    <property type="entry name" value="Pet191_N"/>
    <property type="match status" value="1"/>
</dbReference>
<dbReference type="PROSITE" id="PS51808">
    <property type="entry name" value="CHCH"/>
    <property type="match status" value="1"/>
</dbReference>